<accession>A4SJV7</accession>
<feature type="chain" id="PRO_0000321620" description="Octanoyltransferase">
    <location>
        <begin position="1"/>
        <end position="225"/>
    </location>
</feature>
<feature type="domain" description="BPL/LPL catalytic" evidence="2">
    <location>
        <begin position="37"/>
        <end position="217"/>
    </location>
</feature>
<feature type="active site" description="Acyl-thioester intermediate" evidence="1">
    <location>
        <position position="179"/>
    </location>
</feature>
<feature type="binding site" evidence="1">
    <location>
        <begin position="76"/>
        <end position="83"/>
    </location>
    <ligand>
        <name>substrate</name>
    </ligand>
</feature>
<feature type="binding site" evidence="1">
    <location>
        <begin position="148"/>
        <end position="150"/>
    </location>
    <ligand>
        <name>substrate</name>
    </ligand>
</feature>
<feature type="binding site" evidence="1">
    <location>
        <begin position="161"/>
        <end position="163"/>
    </location>
    <ligand>
        <name>substrate</name>
    </ligand>
</feature>
<feature type="site" description="Lowers pKa of active site Cys" evidence="1">
    <location>
        <position position="145"/>
    </location>
</feature>
<gene>
    <name evidence="1" type="primary">lipB</name>
    <name type="ordered locus">ASA_1056</name>
</gene>
<evidence type="ECO:0000255" key="1">
    <source>
        <dbReference type="HAMAP-Rule" id="MF_00013"/>
    </source>
</evidence>
<evidence type="ECO:0000255" key="2">
    <source>
        <dbReference type="PROSITE-ProRule" id="PRU01067"/>
    </source>
</evidence>
<sequence>MSLQIPAQPQLLVRQLGRRPYQPVWDAMKAFTDNRTSDTPDEFWVVEHDPVYTQGQAGKAEHLLAPGDIPVVQSDRGGQVTYHGPGQLVLYVLVDVRRSKLSVRELVTCLETAIINTLAKSDIQAYAKADAPGVYVTNELGMEAKLASLGLRIRKGCSFHGLALNINMDMTPFLRINPCGYAGMAMTQTSALGGPQSVAEAQAILVAELASLIGYQTITNADDTP</sequence>
<organism>
    <name type="scientific">Aeromonas salmonicida (strain A449)</name>
    <dbReference type="NCBI Taxonomy" id="382245"/>
    <lineage>
        <taxon>Bacteria</taxon>
        <taxon>Pseudomonadati</taxon>
        <taxon>Pseudomonadota</taxon>
        <taxon>Gammaproteobacteria</taxon>
        <taxon>Aeromonadales</taxon>
        <taxon>Aeromonadaceae</taxon>
        <taxon>Aeromonas</taxon>
    </lineage>
</organism>
<dbReference type="EC" id="2.3.1.181" evidence="1"/>
<dbReference type="EMBL" id="CP000644">
    <property type="protein sequence ID" value="ABO89179.1"/>
    <property type="molecule type" value="Genomic_DNA"/>
</dbReference>
<dbReference type="RefSeq" id="WP_005317363.1">
    <property type="nucleotide sequence ID" value="NC_009348.1"/>
</dbReference>
<dbReference type="SMR" id="A4SJV7"/>
<dbReference type="STRING" id="29491.GCA_000820065_02583"/>
<dbReference type="KEGG" id="asa:ASA_1056"/>
<dbReference type="eggNOG" id="COG0321">
    <property type="taxonomic scope" value="Bacteria"/>
</dbReference>
<dbReference type="HOGENOM" id="CLU_035168_3_1_6"/>
<dbReference type="UniPathway" id="UPA00538">
    <property type="reaction ID" value="UER00592"/>
</dbReference>
<dbReference type="Proteomes" id="UP000000225">
    <property type="component" value="Chromosome"/>
</dbReference>
<dbReference type="GO" id="GO:0005737">
    <property type="term" value="C:cytoplasm"/>
    <property type="evidence" value="ECO:0007669"/>
    <property type="project" value="UniProtKB-SubCell"/>
</dbReference>
<dbReference type="GO" id="GO:0033819">
    <property type="term" value="F:lipoyl(octanoyl) transferase activity"/>
    <property type="evidence" value="ECO:0007669"/>
    <property type="project" value="UniProtKB-EC"/>
</dbReference>
<dbReference type="GO" id="GO:0036211">
    <property type="term" value="P:protein modification process"/>
    <property type="evidence" value="ECO:0007669"/>
    <property type="project" value="InterPro"/>
</dbReference>
<dbReference type="CDD" id="cd16444">
    <property type="entry name" value="LipB"/>
    <property type="match status" value="1"/>
</dbReference>
<dbReference type="FunFam" id="3.30.930.10:FF:000020">
    <property type="entry name" value="Octanoyltransferase"/>
    <property type="match status" value="1"/>
</dbReference>
<dbReference type="Gene3D" id="3.30.930.10">
    <property type="entry name" value="Bira Bifunctional Protein, Domain 2"/>
    <property type="match status" value="1"/>
</dbReference>
<dbReference type="HAMAP" id="MF_00013">
    <property type="entry name" value="LipB"/>
    <property type="match status" value="1"/>
</dbReference>
<dbReference type="InterPro" id="IPR045864">
    <property type="entry name" value="aa-tRNA-synth_II/BPL/LPL"/>
</dbReference>
<dbReference type="InterPro" id="IPR004143">
    <property type="entry name" value="BPL_LPL_catalytic"/>
</dbReference>
<dbReference type="InterPro" id="IPR000544">
    <property type="entry name" value="Octanoyltransferase"/>
</dbReference>
<dbReference type="InterPro" id="IPR020605">
    <property type="entry name" value="Octanoyltransferase_CS"/>
</dbReference>
<dbReference type="NCBIfam" id="TIGR00214">
    <property type="entry name" value="lipB"/>
    <property type="match status" value="1"/>
</dbReference>
<dbReference type="NCBIfam" id="NF010922">
    <property type="entry name" value="PRK14342.1"/>
    <property type="match status" value="1"/>
</dbReference>
<dbReference type="PANTHER" id="PTHR10993:SF7">
    <property type="entry name" value="LIPOYLTRANSFERASE 2, MITOCHONDRIAL-RELATED"/>
    <property type="match status" value="1"/>
</dbReference>
<dbReference type="PANTHER" id="PTHR10993">
    <property type="entry name" value="OCTANOYLTRANSFERASE"/>
    <property type="match status" value="1"/>
</dbReference>
<dbReference type="Pfam" id="PF21948">
    <property type="entry name" value="LplA-B_cat"/>
    <property type="match status" value="1"/>
</dbReference>
<dbReference type="PIRSF" id="PIRSF016262">
    <property type="entry name" value="LPLase"/>
    <property type="match status" value="1"/>
</dbReference>
<dbReference type="SUPFAM" id="SSF55681">
    <property type="entry name" value="Class II aaRS and biotin synthetases"/>
    <property type="match status" value="1"/>
</dbReference>
<dbReference type="PROSITE" id="PS51733">
    <property type="entry name" value="BPL_LPL_CATALYTIC"/>
    <property type="match status" value="1"/>
</dbReference>
<dbReference type="PROSITE" id="PS01313">
    <property type="entry name" value="LIPB"/>
    <property type="match status" value="1"/>
</dbReference>
<proteinExistence type="inferred from homology"/>
<protein>
    <recommendedName>
        <fullName evidence="1">Octanoyltransferase</fullName>
        <ecNumber evidence="1">2.3.1.181</ecNumber>
    </recommendedName>
    <alternativeName>
        <fullName evidence="1">Lipoate-protein ligase B</fullName>
    </alternativeName>
    <alternativeName>
        <fullName evidence="1">Lipoyl/octanoyl transferase</fullName>
    </alternativeName>
    <alternativeName>
        <fullName evidence="1">Octanoyl-[acyl-carrier-protein]-protein N-octanoyltransferase</fullName>
    </alternativeName>
</protein>
<name>LIPB_AERS4</name>
<reference key="1">
    <citation type="journal article" date="2008" name="BMC Genomics">
        <title>The genome of Aeromonas salmonicida subsp. salmonicida A449: insights into the evolution of a fish pathogen.</title>
        <authorList>
            <person name="Reith M.E."/>
            <person name="Singh R.K."/>
            <person name="Curtis B."/>
            <person name="Boyd J.M."/>
            <person name="Bouevitch A."/>
            <person name="Kimball J."/>
            <person name="Munholland J."/>
            <person name="Murphy C."/>
            <person name="Sarty D."/>
            <person name="Williams J."/>
            <person name="Nash J.H."/>
            <person name="Johnson S.C."/>
            <person name="Brown L.L."/>
        </authorList>
    </citation>
    <scope>NUCLEOTIDE SEQUENCE [LARGE SCALE GENOMIC DNA]</scope>
    <source>
        <strain>A449</strain>
    </source>
</reference>
<keyword id="KW-0012">Acyltransferase</keyword>
<keyword id="KW-0963">Cytoplasm</keyword>
<keyword id="KW-0808">Transferase</keyword>
<comment type="function">
    <text evidence="1">Catalyzes the transfer of endogenously produced octanoic acid from octanoyl-acyl-carrier-protein onto the lipoyl domains of lipoate-dependent enzymes. Lipoyl-ACP can also act as a substrate although octanoyl-ACP is likely to be the physiological substrate.</text>
</comment>
<comment type="catalytic activity">
    <reaction evidence="1">
        <text>octanoyl-[ACP] + L-lysyl-[protein] = N(6)-octanoyl-L-lysyl-[protein] + holo-[ACP] + H(+)</text>
        <dbReference type="Rhea" id="RHEA:17665"/>
        <dbReference type="Rhea" id="RHEA-COMP:9636"/>
        <dbReference type="Rhea" id="RHEA-COMP:9685"/>
        <dbReference type="Rhea" id="RHEA-COMP:9752"/>
        <dbReference type="Rhea" id="RHEA-COMP:9928"/>
        <dbReference type="ChEBI" id="CHEBI:15378"/>
        <dbReference type="ChEBI" id="CHEBI:29969"/>
        <dbReference type="ChEBI" id="CHEBI:64479"/>
        <dbReference type="ChEBI" id="CHEBI:78463"/>
        <dbReference type="ChEBI" id="CHEBI:78809"/>
        <dbReference type="EC" id="2.3.1.181"/>
    </reaction>
</comment>
<comment type="pathway">
    <text evidence="1">Protein modification; protein lipoylation via endogenous pathway; protein N(6)-(lipoyl)lysine from octanoyl-[acyl-carrier-protein]: step 1/2.</text>
</comment>
<comment type="subcellular location">
    <subcellularLocation>
        <location evidence="1">Cytoplasm</location>
    </subcellularLocation>
</comment>
<comment type="miscellaneous">
    <text evidence="1">In the reaction, the free carboxyl group of octanoic acid is attached via an amide linkage to the epsilon-amino group of a specific lysine residue of lipoyl domains of lipoate-dependent enzymes.</text>
</comment>
<comment type="similarity">
    <text evidence="1">Belongs to the LipB family.</text>
</comment>